<evidence type="ECO:0000250" key="1"/>
<evidence type="ECO:0000255" key="2"/>
<evidence type="ECO:0000255" key="3">
    <source>
        <dbReference type="PROSITE-ProRule" id="PRU01066"/>
    </source>
</evidence>
<evidence type="ECO:0000255" key="4">
    <source>
        <dbReference type="PROSITE-ProRule" id="PRU01170"/>
    </source>
</evidence>
<evidence type="ECO:0000256" key="5">
    <source>
        <dbReference type="SAM" id="MobiDB-lite"/>
    </source>
</evidence>
<evidence type="ECO:0000305" key="6"/>
<organism>
    <name type="scientific">Buchnera aphidicola subsp. Baizongia pistaciae (strain Bp)</name>
    <dbReference type="NCBI Taxonomy" id="224915"/>
    <lineage>
        <taxon>Bacteria</taxon>
        <taxon>Pseudomonadati</taxon>
        <taxon>Pseudomonadota</taxon>
        <taxon>Gammaproteobacteria</taxon>
        <taxon>Enterobacterales</taxon>
        <taxon>Erwiniaceae</taxon>
        <taxon>Buchnera</taxon>
    </lineage>
</organism>
<comment type="function">
    <text evidence="1">The pyruvate dehydrogenase complex catalyzes the overall conversion of pyruvate to acetyl-CoA and CO(2). It contains multiple copies of three enzymatic components: pyruvate dehydrogenase (E1), dihydrolipoamide acetyltransferase (E2) and lipoamide dehydrogenase (E3) (By similarity).</text>
</comment>
<comment type="catalytic activity">
    <reaction>
        <text>N(6)-[(R)-dihydrolipoyl]-L-lysyl-[protein] + acetyl-CoA = N(6)-[(R)-S(8)-acetyldihydrolipoyl]-L-lysyl-[protein] + CoA</text>
        <dbReference type="Rhea" id="RHEA:17017"/>
        <dbReference type="Rhea" id="RHEA-COMP:10475"/>
        <dbReference type="Rhea" id="RHEA-COMP:10478"/>
        <dbReference type="ChEBI" id="CHEBI:57287"/>
        <dbReference type="ChEBI" id="CHEBI:57288"/>
        <dbReference type="ChEBI" id="CHEBI:83100"/>
        <dbReference type="ChEBI" id="CHEBI:83111"/>
        <dbReference type="EC" id="2.3.1.12"/>
    </reaction>
</comment>
<comment type="cofactor">
    <cofactor evidence="1">
        <name>(R)-lipoate</name>
        <dbReference type="ChEBI" id="CHEBI:83088"/>
    </cofactor>
    <text evidence="1">Binds 1 lipoyl cofactor covalently.</text>
</comment>
<comment type="subunit">
    <text evidence="1">Forms a 24-polypeptide structural core with octahedral symmetry.</text>
</comment>
<comment type="similarity">
    <text evidence="6">Belongs to the 2-oxoacid dehydrogenase family.</text>
</comment>
<comment type="sequence caution" evidence="6">
    <conflict type="erroneous initiation">
        <sequence resource="EMBL-CDS" id="AAO26922"/>
    </conflict>
</comment>
<proteinExistence type="inferred from homology"/>
<accession>Q89AQ9</accession>
<feature type="chain" id="PRO_0000162277" description="Dihydrolipoyllysine-residue acetyltransferase component of pyruvate dehydrogenase complex">
    <location>
        <begin position="1"/>
        <end position="410"/>
    </location>
</feature>
<feature type="domain" description="Lipoyl-binding" evidence="3">
    <location>
        <begin position="1"/>
        <end position="69"/>
    </location>
</feature>
<feature type="domain" description="Peripheral subunit-binding (PSBD)" evidence="4">
    <location>
        <begin position="113"/>
        <end position="150"/>
    </location>
</feature>
<feature type="region of interest" description="Disordered" evidence="5">
    <location>
        <begin position="81"/>
        <end position="100"/>
    </location>
</feature>
<feature type="active site" evidence="2">
    <location>
        <position position="383"/>
    </location>
</feature>
<feature type="modified residue" description="N6-lipoyllysine" evidence="1 3">
    <location>
        <position position="35"/>
    </location>
</feature>
<reference key="1">
    <citation type="journal article" date="2003" name="Proc. Natl. Acad. Sci. U.S.A.">
        <title>Reductive genome evolution in Buchnera aphidicola.</title>
        <authorList>
            <person name="van Ham R.C.H.J."/>
            <person name="Kamerbeek J."/>
            <person name="Palacios C."/>
            <person name="Rausell C."/>
            <person name="Abascal F."/>
            <person name="Bastolla U."/>
            <person name="Fernandez J.M."/>
            <person name="Jimenez L."/>
            <person name="Postigo M."/>
            <person name="Silva F.J."/>
            <person name="Tamames J."/>
            <person name="Viguera E."/>
            <person name="Latorre A."/>
            <person name="Valencia A."/>
            <person name="Moran F."/>
            <person name="Moya A."/>
        </authorList>
    </citation>
    <scope>NUCLEOTIDE SEQUENCE [LARGE SCALE GENOMIC DNA]</scope>
    <source>
        <strain>Bp</strain>
    </source>
</reference>
<protein>
    <recommendedName>
        <fullName>Dihydrolipoyllysine-residue acetyltransferase component of pyruvate dehydrogenase complex</fullName>
        <ecNumber>2.3.1.12</ecNumber>
    </recommendedName>
    <alternativeName>
        <fullName>Dihydrolipoamide acetyltransferase component of pyruvate dehydrogenase complex</fullName>
    </alternativeName>
    <alternativeName>
        <fullName>E2</fullName>
    </alternativeName>
</protein>
<keyword id="KW-0012">Acyltransferase</keyword>
<keyword id="KW-0450">Lipoyl</keyword>
<keyword id="KW-1185">Reference proteome</keyword>
<keyword id="KW-0808">Transferase</keyword>
<sequence>MPDIGTDLVEVIEILVKIGDQVKKDDSLITVEGQKASIEIPASHTGTIKNIIVHIGEKITTGSLIAILNGIDDNVKSKNDSSSYSFKNSKNTSTNSNLGNVNNNINNRTILVHATPTVRRLARKFDIKLENITGTGRKGRILKEDVISYKNISLFNDIKKSLKKTNVNYYKDNVTCDDFKSIELTRTQIRSSKNLLKSWLTIPHVTQFDESDITELENFRQKYNSDLKDKSKKLTILIFVIKAVSKALEMFPKFNGRLINKDNRIAIVLNEHINIGIVVDTDDGLLVPVINRVNKKNISSISNDLRIISERARSRKLNFSDIKEYGSFTISNLGGIGGTNFTPIIKYPELAILGISRALIKPYWNSHAFIPKLMLPLSLSYDHRAIDGVAAVRFITFVKKMLTDIRFLMI</sequence>
<name>ODP2_BUCBP</name>
<gene>
    <name type="primary">aceF</name>
    <name type="ordered locus">bbp_190</name>
</gene>
<dbReference type="EC" id="2.3.1.12"/>
<dbReference type="EMBL" id="AE016826">
    <property type="protein sequence ID" value="AAO26922.1"/>
    <property type="status" value="ALT_INIT"/>
    <property type="molecule type" value="Genomic_DNA"/>
</dbReference>
<dbReference type="RefSeq" id="WP_011091323.1">
    <property type="nucleotide sequence ID" value="NC_004545.1"/>
</dbReference>
<dbReference type="SMR" id="Q89AQ9"/>
<dbReference type="STRING" id="224915.bbp_190"/>
<dbReference type="KEGG" id="bab:bbp_190"/>
<dbReference type="eggNOG" id="COG0508">
    <property type="taxonomic scope" value="Bacteria"/>
</dbReference>
<dbReference type="HOGENOM" id="CLU_016733_10_0_6"/>
<dbReference type="OrthoDB" id="9805770at2"/>
<dbReference type="Proteomes" id="UP000000601">
    <property type="component" value="Chromosome"/>
</dbReference>
<dbReference type="GO" id="GO:0005737">
    <property type="term" value="C:cytoplasm"/>
    <property type="evidence" value="ECO:0007669"/>
    <property type="project" value="TreeGrafter"/>
</dbReference>
<dbReference type="GO" id="GO:0004742">
    <property type="term" value="F:dihydrolipoyllysine-residue acetyltransferase activity"/>
    <property type="evidence" value="ECO:0007669"/>
    <property type="project" value="UniProtKB-EC"/>
</dbReference>
<dbReference type="GO" id="GO:0031405">
    <property type="term" value="F:lipoic acid binding"/>
    <property type="evidence" value="ECO:0007669"/>
    <property type="project" value="TreeGrafter"/>
</dbReference>
<dbReference type="GO" id="GO:0006086">
    <property type="term" value="P:pyruvate decarboxylation to acetyl-CoA"/>
    <property type="evidence" value="ECO:0007669"/>
    <property type="project" value="TreeGrafter"/>
</dbReference>
<dbReference type="CDD" id="cd06849">
    <property type="entry name" value="lipoyl_domain"/>
    <property type="match status" value="1"/>
</dbReference>
<dbReference type="FunFam" id="3.30.559.10:FF:000004">
    <property type="entry name" value="Acetyltransferase component of pyruvate dehydrogenase complex"/>
    <property type="match status" value="1"/>
</dbReference>
<dbReference type="Gene3D" id="2.40.50.100">
    <property type="match status" value="1"/>
</dbReference>
<dbReference type="Gene3D" id="3.30.559.10">
    <property type="entry name" value="Chloramphenicol acetyltransferase-like domain"/>
    <property type="match status" value="1"/>
</dbReference>
<dbReference type="Gene3D" id="4.10.320.10">
    <property type="entry name" value="E3-binding domain"/>
    <property type="match status" value="1"/>
</dbReference>
<dbReference type="InterPro" id="IPR003016">
    <property type="entry name" value="2-oxoA_DH_lipoyl-BS"/>
</dbReference>
<dbReference type="InterPro" id="IPR001078">
    <property type="entry name" value="2-oxoacid_DH_actylTfrase"/>
</dbReference>
<dbReference type="InterPro" id="IPR050743">
    <property type="entry name" value="2-oxoacid_DH_E2_comp"/>
</dbReference>
<dbReference type="InterPro" id="IPR000089">
    <property type="entry name" value="Biotin_lipoyl"/>
</dbReference>
<dbReference type="InterPro" id="IPR023213">
    <property type="entry name" value="CAT-like_dom_sf"/>
</dbReference>
<dbReference type="InterPro" id="IPR036625">
    <property type="entry name" value="E3-bd_dom_sf"/>
</dbReference>
<dbReference type="InterPro" id="IPR004167">
    <property type="entry name" value="PSBD"/>
</dbReference>
<dbReference type="InterPro" id="IPR011053">
    <property type="entry name" value="Single_hybrid_motif"/>
</dbReference>
<dbReference type="PANTHER" id="PTHR43178">
    <property type="entry name" value="DIHYDROLIPOAMIDE ACETYLTRANSFERASE COMPONENT OF PYRUVATE DEHYDROGENASE COMPLEX"/>
    <property type="match status" value="1"/>
</dbReference>
<dbReference type="PANTHER" id="PTHR43178:SF2">
    <property type="entry name" value="DIHYDROLIPOYLLYSINE-RESIDUE ACETYLTRANSFERASE COMPONENT OF PYRUVATE DEHYDROGENASE COMPLEX"/>
    <property type="match status" value="1"/>
</dbReference>
<dbReference type="Pfam" id="PF00198">
    <property type="entry name" value="2-oxoacid_dh"/>
    <property type="match status" value="1"/>
</dbReference>
<dbReference type="Pfam" id="PF00364">
    <property type="entry name" value="Biotin_lipoyl"/>
    <property type="match status" value="1"/>
</dbReference>
<dbReference type="Pfam" id="PF02817">
    <property type="entry name" value="E3_binding"/>
    <property type="match status" value="1"/>
</dbReference>
<dbReference type="SUPFAM" id="SSF52777">
    <property type="entry name" value="CoA-dependent acyltransferases"/>
    <property type="match status" value="1"/>
</dbReference>
<dbReference type="SUPFAM" id="SSF47005">
    <property type="entry name" value="Peripheral subunit-binding domain of 2-oxo acid dehydrogenase complex"/>
    <property type="match status" value="1"/>
</dbReference>
<dbReference type="SUPFAM" id="SSF51230">
    <property type="entry name" value="Single hybrid motif"/>
    <property type="match status" value="1"/>
</dbReference>
<dbReference type="PROSITE" id="PS50968">
    <property type="entry name" value="BIOTINYL_LIPOYL"/>
    <property type="match status" value="1"/>
</dbReference>
<dbReference type="PROSITE" id="PS00189">
    <property type="entry name" value="LIPOYL"/>
    <property type="match status" value="1"/>
</dbReference>
<dbReference type="PROSITE" id="PS51826">
    <property type="entry name" value="PSBD"/>
    <property type="match status" value="1"/>
</dbReference>